<gene>
    <name type="ORF">SPBC215.11c</name>
</gene>
<protein>
    <recommendedName>
        <fullName>Uncharacterized oxidoreductase C215.11c</fullName>
        <ecNumber>1.-.-.-</ecNumber>
    </recommendedName>
</protein>
<accession>O94315</accession>
<proteinExistence type="inferred from homology"/>
<name>YH5B_SCHPO</name>
<organism>
    <name type="scientific">Schizosaccharomyces pombe (strain 972 / ATCC 24843)</name>
    <name type="common">Fission yeast</name>
    <dbReference type="NCBI Taxonomy" id="284812"/>
    <lineage>
        <taxon>Eukaryota</taxon>
        <taxon>Fungi</taxon>
        <taxon>Dikarya</taxon>
        <taxon>Ascomycota</taxon>
        <taxon>Taphrinomycotina</taxon>
        <taxon>Schizosaccharomycetes</taxon>
        <taxon>Schizosaccharomycetales</taxon>
        <taxon>Schizosaccharomycetaceae</taxon>
        <taxon>Schizosaccharomyces</taxon>
    </lineage>
</organism>
<sequence>MSKTAASSAVDASQAGTVKVGDMVVNRMGFGAMRVTGDGIWDEPKDKEACIATLKRLPELNINFIDTADSYGPEVSENLLREALYPYKGLIIATKGGLVRTGPNEWHPCGAPKFLRQEVLMSMRRLGVKQIDLWQLHRIDPKVPRKDQFSEIAAMKKEGLIRHVGLSEVTVDDIKEAEQYFPVVSVQNLFNLVNRKNEKVLEYCEQKGIAFIPWYPLASGALAKPGTILDAVSKDLDRSTSQIALSWVLQRSPVMLPIPGTSKVDHLEENVKAAGIQLSSEVFAKLDEEGKSEDAKRQEEEKKKSS</sequence>
<reference key="1">
    <citation type="journal article" date="2002" name="Nature">
        <title>The genome sequence of Schizosaccharomyces pombe.</title>
        <authorList>
            <person name="Wood V."/>
            <person name="Gwilliam R."/>
            <person name="Rajandream M.A."/>
            <person name="Lyne M.H."/>
            <person name="Lyne R."/>
            <person name="Stewart A."/>
            <person name="Sgouros J.G."/>
            <person name="Peat N."/>
            <person name="Hayles J."/>
            <person name="Baker S.G."/>
            <person name="Basham D."/>
            <person name="Bowman S."/>
            <person name="Brooks K."/>
            <person name="Brown D."/>
            <person name="Brown S."/>
            <person name="Chillingworth T."/>
            <person name="Churcher C.M."/>
            <person name="Collins M."/>
            <person name="Connor R."/>
            <person name="Cronin A."/>
            <person name="Davis P."/>
            <person name="Feltwell T."/>
            <person name="Fraser A."/>
            <person name="Gentles S."/>
            <person name="Goble A."/>
            <person name="Hamlin N."/>
            <person name="Harris D.E."/>
            <person name="Hidalgo J."/>
            <person name="Hodgson G."/>
            <person name="Holroyd S."/>
            <person name="Hornsby T."/>
            <person name="Howarth S."/>
            <person name="Huckle E.J."/>
            <person name="Hunt S."/>
            <person name="Jagels K."/>
            <person name="James K.D."/>
            <person name="Jones L."/>
            <person name="Jones M."/>
            <person name="Leather S."/>
            <person name="McDonald S."/>
            <person name="McLean J."/>
            <person name="Mooney P."/>
            <person name="Moule S."/>
            <person name="Mungall K.L."/>
            <person name="Murphy L.D."/>
            <person name="Niblett D."/>
            <person name="Odell C."/>
            <person name="Oliver K."/>
            <person name="O'Neil S."/>
            <person name="Pearson D."/>
            <person name="Quail M.A."/>
            <person name="Rabbinowitsch E."/>
            <person name="Rutherford K.M."/>
            <person name="Rutter S."/>
            <person name="Saunders D."/>
            <person name="Seeger K."/>
            <person name="Sharp S."/>
            <person name="Skelton J."/>
            <person name="Simmonds M.N."/>
            <person name="Squares R."/>
            <person name="Squares S."/>
            <person name="Stevens K."/>
            <person name="Taylor K."/>
            <person name="Taylor R.G."/>
            <person name="Tivey A."/>
            <person name="Walsh S.V."/>
            <person name="Warren T."/>
            <person name="Whitehead S."/>
            <person name="Woodward J.R."/>
            <person name="Volckaert G."/>
            <person name="Aert R."/>
            <person name="Robben J."/>
            <person name="Grymonprez B."/>
            <person name="Weltjens I."/>
            <person name="Vanstreels E."/>
            <person name="Rieger M."/>
            <person name="Schaefer M."/>
            <person name="Mueller-Auer S."/>
            <person name="Gabel C."/>
            <person name="Fuchs M."/>
            <person name="Duesterhoeft A."/>
            <person name="Fritzc C."/>
            <person name="Holzer E."/>
            <person name="Moestl D."/>
            <person name="Hilbert H."/>
            <person name="Borzym K."/>
            <person name="Langer I."/>
            <person name="Beck A."/>
            <person name="Lehrach H."/>
            <person name="Reinhardt R."/>
            <person name="Pohl T.M."/>
            <person name="Eger P."/>
            <person name="Zimmermann W."/>
            <person name="Wedler H."/>
            <person name="Wambutt R."/>
            <person name="Purnelle B."/>
            <person name="Goffeau A."/>
            <person name="Cadieu E."/>
            <person name="Dreano S."/>
            <person name="Gloux S."/>
            <person name="Lelaure V."/>
            <person name="Mottier S."/>
            <person name="Galibert F."/>
            <person name="Aves S.J."/>
            <person name="Xiang Z."/>
            <person name="Hunt C."/>
            <person name="Moore K."/>
            <person name="Hurst S.M."/>
            <person name="Lucas M."/>
            <person name="Rochet M."/>
            <person name="Gaillardin C."/>
            <person name="Tallada V.A."/>
            <person name="Garzon A."/>
            <person name="Thode G."/>
            <person name="Daga R.R."/>
            <person name="Cruzado L."/>
            <person name="Jimenez J."/>
            <person name="Sanchez M."/>
            <person name="del Rey F."/>
            <person name="Benito J."/>
            <person name="Dominguez A."/>
            <person name="Revuelta J.L."/>
            <person name="Moreno S."/>
            <person name="Armstrong J."/>
            <person name="Forsburg S.L."/>
            <person name="Cerutti L."/>
            <person name="Lowe T."/>
            <person name="McCombie W.R."/>
            <person name="Paulsen I."/>
            <person name="Potashkin J."/>
            <person name="Shpakovski G.V."/>
            <person name="Ussery D."/>
            <person name="Barrell B.G."/>
            <person name="Nurse P."/>
        </authorList>
    </citation>
    <scope>NUCLEOTIDE SEQUENCE [LARGE SCALE GENOMIC DNA]</scope>
    <source>
        <strain>972 / ATCC 24843</strain>
    </source>
</reference>
<reference key="2">
    <citation type="journal article" date="2006" name="Nat. Biotechnol.">
        <title>ORFeome cloning and global analysis of protein localization in the fission yeast Schizosaccharomyces pombe.</title>
        <authorList>
            <person name="Matsuyama A."/>
            <person name="Arai R."/>
            <person name="Yashiroda Y."/>
            <person name="Shirai A."/>
            <person name="Kamata A."/>
            <person name="Sekido S."/>
            <person name="Kobayashi Y."/>
            <person name="Hashimoto A."/>
            <person name="Hamamoto M."/>
            <person name="Hiraoka Y."/>
            <person name="Horinouchi S."/>
            <person name="Yoshida M."/>
        </authorList>
    </citation>
    <scope>SUBCELLULAR LOCATION [LARGE SCALE ANALYSIS]</scope>
</reference>
<feature type="chain" id="PRO_0000310312" description="Uncharacterized oxidoreductase C215.11c">
    <location>
        <begin position="1"/>
        <end position="306"/>
    </location>
</feature>
<feature type="region of interest" description="Disordered" evidence="1">
    <location>
        <begin position="287"/>
        <end position="306"/>
    </location>
</feature>
<dbReference type="EC" id="1.-.-.-"/>
<dbReference type="EMBL" id="CU329671">
    <property type="protein sequence ID" value="CAA22125.1"/>
    <property type="molecule type" value="Genomic_DNA"/>
</dbReference>
<dbReference type="PIR" id="T39901">
    <property type="entry name" value="T39901"/>
</dbReference>
<dbReference type="RefSeq" id="NP_596688.1">
    <property type="nucleotide sequence ID" value="NM_001022611.2"/>
</dbReference>
<dbReference type="SMR" id="O94315"/>
<dbReference type="BioGRID" id="277222">
    <property type="interactions" value="7"/>
</dbReference>
<dbReference type="FunCoup" id="O94315">
    <property type="interactions" value="423"/>
</dbReference>
<dbReference type="STRING" id="284812.O94315"/>
<dbReference type="iPTMnet" id="O94315"/>
<dbReference type="PaxDb" id="4896-SPBC215.11c.1"/>
<dbReference type="EnsemblFungi" id="SPBC215.11c.1">
    <property type="protein sequence ID" value="SPBC215.11c.1:pep"/>
    <property type="gene ID" value="SPBC215.11c"/>
</dbReference>
<dbReference type="KEGG" id="spo:2540698"/>
<dbReference type="PomBase" id="SPBC215.11c"/>
<dbReference type="VEuPathDB" id="FungiDB:SPBC215.11c"/>
<dbReference type="eggNOG" id="KOG1575">
    <property type="taxonomic scope" value="Eukaryota"/>
</dbReference>
<dbReference type="HOGENOM" id="CLU_023205_2_1_1"/>
<dbReference type="InParanoid" id="O94315"/>
<dbReference type="OMA" id="FIPWFPV"/>
<dbReference type="PhylomeDB" id="O94315"/>
<dbReference type="PRO" id="PR:O94315"/>
<dbReference type="Proteomes" id="UP000002485">
    <property type="component" value="Chromosome II"/>
</dbReference>
<dbReference type="GO" id="GO:0005737">
    <property type="term" value="C:cytoplasm"/>
    <property type="evidence" value="ECO:0000318"/>
    <property type="project" value="GO_Central"/>
</dbReference>
<dbReference type="GO" id="GO:0005829">
    <property type="term" value="C:cytosol"/>
    <property type="evidence" value="ECO:0007005"/>
    <property type="project" value="PomBase"/>
</dbReference>
<dbReference type="GO" id="GO:0005634">
    <property type="term" value="C:nucleus"/>
    <property type="evidence" value="ECO:0007005"/>
    <property type="project" value="PomBase"/>
</dbReference>
<dbReference type="GO" id="GO:0004033">
    <property type="term" value="F:aldo-keto reductase (NADPH) activity"/>
    <property type="evidence" value="ECO:0000318"/>
    <property type="project" value="GO_Central"/>
</dbReference>
<dbReference type="CDD" id="cd19088">
    <property type="entry name" value="AKR_AKR13B1"/>
    <property type="match status" value="1"/>
</dbReference>
<dbReference type="Gene3D" id="3.20.20.100">
    <property type="entry name" value="NADP-dependent oxidoreductase domain"/>
    <property type="match status" value="1"/>
</dbReference>
<dbReference type="InterPro" id="IPR020471">
    <property type="entry name" value="AKR"/>
</dbReference>
<dbReference type="InterPro" id="IPR050791">
    <property type="entry name" value="Aldo-Keto_reductase"/>
</dbReference>
<dbReference type="InterPro" id="IPR023210">
    <property type="entry name" value="NADP_OxRdtase_dom"/>
</dbReference>
<dbReference type="InterPro" id="IPR036812">
    <property type="entry name" value="NADP_OxRdtase_dom_sf"/>
</dbReference>
<dbReference type="PANTHER" id="PTHR43625">
    <property type="entry name" value="AFLATOXIN B1 ALDEHYDE REDUCTASE"/>
    <property type="match status" value="1"/>
</dbReference>
<dbReference type="PANTHER" id="PTHR43625:SF40">
    <property type="entry name" value="ALDO-KETO REDUCTASE YAKC [NADP(+)]"/>
    <property type="match status" value="1"/>
</dbReference>
<dbReference type="Pfam" id="PF00248">
    <property type="entry name" value="Aldo_ket_red"/>
    <property type="match status" value="1"/>
</dbReference>
<dbReference type="PRINTS" id="PR00069">
    <property type="entry name" value="ALDKETRDTASE"/>
</dbReference>
<dbReference type="SUPFAM" id="SSF51430">
    <property type="entry name" value="NAD(P)-linked oxidoreductase"/>
    <property type="match status" value="1"/>
</dbReference>
<evidence type="ECO:0000256" key="1">
    <source>
        <dbReference type="SAM" id="MobiDB-lite"/>
    </source>
</evidence>
<evidence type="ECO:0000269" key="2">
    <source>
    </source>
</evidence>
<evidence type="ECO:0000305" key="3"/>
<keyword id="KW-0963">Cytoplasm</keyword>
<keyword id="KW-0539">Nucleus</keyword>
<keyword id="KW-0560">Oxidoreductase</keyword>
<keyword id="KW-1185">Reference proteome</keyword>
<comment type="subcellular location">
    <subcellularLocation>
        <location evidence="2">Cytoplasm</location>
    </subcellularLocation>
    <subcellularLocation>
        <location evidence="2">Nucleus</location>
    </subcellularLocation>
</comment>
<comment type="similarity">
    <text evidence="3">Belongs to the aldo/keto reductase family.</text>
</comment>